<gene>
    <name evidence="1" type="primary">ureF</name>
    <name type="ordered locus">Mjls_2831</name>
</gene>
<accession>A3Q0D4</accession>
<reference key="1">
    <citation type="submission" date="2007-02" db="EMBL/GenBank/DDBJ databases">
        <title>Complete sequence of Mycobacterium sp. JLS.</title>
        <authorList>
            <consortium name="US DOE Joint Genome Institute"/>
            <person name="Copeland A."/>
            <person name="Lucas S."/>
            <person name="Lapidus A."/>
            <person name="Barry K."/>
            <person name="Detter J.C."/>
            <person name="Glavina del Rio T."/>
            <person name="Hammon N."/>
            <person name="Israni S."/>
            <person name="Dalin E."/>
            <person name="Tice H."/>
            <person name="Pitluck S."/>
            <person name="Chain P."/>
            <person name="Malfatti S."/>
            <person name="Shin M."/>
            <person name="Vergez L."/>
            <person name="Schmutz J."/>
            <person name="Larimer F."/>
            <person name="Land M."/>
            <person name="Hauser L."/>
            <person name="Kyrpides N."/>
            <person name="Mikhailova N."/>
            <person name="Miller C.D."/>
            <person name="Anderson A.J."/>
            <person name="Sims R.C."/>
            <person name="Richardson P."/>
        </authorList>
    </citation>
    <scope>NUCLEOTIDE SEQUENCE [LARGE SCALE GENOMIC DNA]</scope>
    <source>
        <strain>JLS</strain>
    </source>
</reference>
<organism>
    <name type="scientific">Mycobacterium sp. (strain JLS)</name>
    <dbReference type="NCBI Taxonomy" id="164757"/>
    <lineage>
        <taxon>Bacteria</taxon>
        <taxon>Bacillati</taxon>
        <taxon>Actinomycetota</taxon>
        <taxon>Actinomycetes</taxon>
        <taxon>Mycobacteriales</taxon>
        <taxon>Mycobacteriaceae</taxon>
        <taxon>Mycobacterium</taxon>
    </lineage>
</organism>
<protein>
    <recommendedName>
        <fullName evidence="1">Urease accessory protein UreF</fullName>
    </recommendedName>
</protein>
<evidence type="ECO:0000255" key="1">
    <source>
        <dbReference type="HAMAP-Rule" id="MF_01385"/>
    </source>
</evidence>
<name>UREF_MYCSJ</name>
<sequence length="211" mass="21554">MTTLTTLLALADSRLPIGGHVHSGGVEEAVTSGLVTNLETLHAYLVRRVRTQGLVAASIAAAVHAGTLTVAAADRETDARTPAPAARTASRAQGRGLARLARRVWPGHDWTALGRAPHLPVASGAVGAVAGLTPGQTALSVVYTTMTGSATAAQRLLALDPGDVAALTFGLAPLCDDVAAAAAEEPADLSDPLLDVLAQRHSERERPLFAS</sequence>
<proteinExistence type="inferred from homology"/>
<keyword id="KW-0143">Chaperone</keyword>
<keyword id="KW-0963">Cytoplasm</keyword>
<keyword id="KW-0996">Nickel insertion</keyword>
<comment type="function">
    <text evidence="1">Required for maturation of urease via the functional incorporation of the urease nickel metallocenter.</text>
</comment>
<comment type="subunit">
    <text evidence="1">UreD, UreF and UreG form a complex that acts as a GTP-hydrolysis-dependent molecular chaperone, activating the urease apoprotein by helping to assemble the nickel containing metallocenter of UreC. The UreE protein probably delivers the nickel.</text>
</comment>
<comment type="subcellular location">
    <subcellularLocation>
        <location evidence="1">Cytoplasm</location>
    </subcellularLocation>
</comment>
<comment type="similarity">
    <text evidence="1">Belongs to the UreF family.</text>
</comment>
<feature type="chain" id="PRO_1000145124" description="Urease accessory protein UreF">
    <location>
        <begin position="1"/>
        <end position="211"/>
    </location>
</feature>
<dbReference type="EMBL" id="CP000580">
    <property type="protein sequence ID" value="ABN98611.1"/>
    <property type="molecule type" value="Genomic_DNA"/>
</dbReference>
<dbReference type="SMR" id="A3Q0D4"/>
<dbReference type="KEGG" id="mjl:Mjls_2831"/>
<dbReference type="HOGENOM" id="CLU_049215_3_0_11"/>
<dbReference type="BioCyc" id="MSP164757:G1G8C-2850-MONOMER"/>
<dbReference type="GO" id="GO:0005737">
    <property type="term" value="C:cytoplasm"/>
    <property type="evidence" value="ECO:0007669"/>
    <property type="project" value="UniProtKB-SubCell"/>
</dbReference>
<dbReference type="GO" id="GO:0016151">
    <property type="term" value="F:nickel cation binding"/>
    <property type="evidence" value="ECO:0007669"/>
    <property type="project" value="UniProtKB-UniRule"/>
</dbReference>
<dbReference type="Gene3D" id="1.10.4190.10">
    <property type="entry name" value="Urease accessory protein UreF"/>
    <property type="match status" value="1"/>
</dbReference>
<dbReference type="HAMAP" id="MF_01385">
    <property type="entry name" value="UreF"/>
    <property type="match status" value="1"/>
</dbReference>
<dbReference type="InterPro" id="IPR002639">
    <property type="entry name" value="UreF"/>
</dbReference>
<dbReference type="InterPro" id="IPR038277">
    <property type="entry name" value="UreF_sf"/>
</dbReference>
<dbReference type="PANTHER" id="PTHR33620">
    <property type="entry name" value="UREASE ACCESSORY PROTEIN F"/>
    <property type="match status" value="1"/>
</dbReference>
<dbReference type="PANTHER" id="PTHR33620:SF1">
    <property type="entry name" value="UREASE ACCESSORY PROTEIN F"/>
    <property type="match status" value="1"/>
</dbReference>
<dbReference type="Pfam" id="PF01730">
    <property type="entry name" value="UreF"/>
    <property type="match status" value="1"/>
</dbReference>
<dbReference type="PIRSF" id="PIRSF009467">
    <property type="entry name" value="Ureas_acces_UreF"/>
    <property type="match status" value="1"/>
</dbReference>